<evidence type="ECO:0000255" key="1">
    <source>
        <dbReference type="HAMAP-Rule" id="MF_01227"/>
    </source>
</evidence>
<gene>
    <name evidence="1" type="primary">pyrG</name>
    <name type="ordered locus">HAPS_1042</name>
</gene>
<protein>
    <recommendedName>
        <fullName evidence="1">CTP synthase</fullName>
        <ecNumber evidence="1">6.3.4.2</ecNumber>
    </recommendedName>
    <alternativeName>
        <fullName evidence="1">Cytidine 5'-triphosphate synthase</fullName>
    </alternativeName>
    <alternativeName>
        <fullName evidence="1">Cytidine triphosphate synthetase</fullName>
        <shortName evidence="1">CTP synthetase</shortName>
        <shortName evidence="1">CTPS</shortName>
    </alternativeName>
    <alternativeName>
        <fullName evidence="1">UTP--ammonia ligase</fullName>
    </alternativeName>
</protein>
<sequence length="544" mass="59904">MATNYIFVTGGVVSSLGKGIAAASLASILEARGLDVTIMKLDPYINVDPGTMSPTQHGEVFVTQDGAETDLDLGHYERFIRTKMTKANNFTSGKIYSEVLRKERRGDYLGATIQVIPHITNEIKARVIEGGKGHDVAIVEVGGTVGDIESLPFLEALRQLAVDVGREKTLFMHLTLVPYIPTAGEVKTKPTQHSVKELLSIGIQPDVLICRSDRMIPANERAKIALFCNVPERAVISLKDVDSIYRIPALLKSQGLDDFVCDRFRLTCKEADLSEWEQVLYQQANPTGEVTIGMVGKYVELPDAYKSVNEALKHAGLKNRLTVNVKYIDSQDVETKGVEVLQGVDAILVPGGFGYRGVEGKIRTAQYARENKIPYLGICLGMQIALIEYARNVAGLTQANSSEFDKHCPQPVVGLITEWQDESGNVETRSDESDLGGTMRLGAQQCHLIEGTKAREVYGTETIVERHRHRYEVNNTLLPQIEAAGLKVSGLSADRKLVEIIEVPNHPWFIAAQFHPEFTSTPRDGHPLFEGFVKAAKEHQGKNA</sequence>
<organism>
    <name type="scientific">Glaesserella parasuis serovar 5 (strain SH0165)</name>
    <name type="common">Haemophilus parasuis</name>
    <dbReference type="NCBI Taxonomy" id="557723"/>
    <lineage>
        <taxon>Bacteria</taxon>
        <taxon>Pseudomonadati</taxon>
        <taxon>Pseudomonadota</taxon>
        <taxon>Gammaproteobacteria</taxon>
        <taxon>Pasteurellales</taxon>
        <taxon>Pasteurellaceae</taxon>
        <taxon>Glaesserella</taxon>
    </lineage>
</organism>
<feature type="chain" id="PRO_1000164946" description="CTP synthase">
    <location>
        <begin position="1"/>
        <end position="544"/>
    </location>
</feature>
<feature type="domain" description="Glutamine amidotransferase type-1" evidence="1">
    <location>
        <begin position="291"/>
        <end position="542"/>
    </location>
</feature>
<feature type="region of interest" description="Amidoligase domain" evidence="1">
    <location>
        <begin position="1"/>
        <end position="266"/>
    </location>
</feature>
<feature type="active site" description="Nucleophile; for glutamine hydrolysis" evidence="1">
    <location>
        <position position="379"/>
    </location>
</feature>
<feature type="active site" evidence="1">
    <location>
        <position position="515"/>
    </location>
</feature>
<feature type="active site" evidence="1">
    <location>
        <position position="517"/>
    </location>
</feature>
<feature type="binding site" evidence="1">
    <location>
        <position position="14"/>
    </location>
    <ligand>
        <name>CTP</name>
        <dbReference type="ChEBI" id="CHEBI:37563"/>
        <note>allosteric inhibitor</note>
    </ligand>
</feature>
<feature type="binding site" evidence="1">
    <location>
        <position position="14"/>
    </location>
    <ligand>
        <name>UTP</name>
        <dbReference type="ChEBI" id="CHEBI:46398"/>
    </ligand>
</feature>
<feature type="binding site" evidence="1">
    <location>
        <begin position="15"/>
        <end position="20"/>
    </location>
    <ligand>
        <name>ATP</name>
        <dbReference type="ChEBI" id="CHEBI:30616"/>
    </ligand>
</feature>
<feature type="binding site" evidence="1">
    <location>
        <position position="72"/>
    </location>
    <ligand>
        <name>ATP</name>
        <dbReference type="ChEBI" id="CHEBI:30616"/>
    </ligand>
</feature>
<feature type="binding site" evidence="1">
    <location>
        <position position="72"/>
    </location>
    <ligand>
        <name>Mg(2+)</name>
        <dbReference type="ChEBI" id="CHEBI:18420"/>
    </ligand>
</feature>
<feature type="binding site" evidence="1">
    <location>
        <position position="140"/>
    </location>
    <ligand>
        <name>Mg(2+)</name>
        <dbReference type="ChEBI" id="CHEBI:18420"/>
    </ligand>
</feature>
<feature type="binding site" evidence="1">
    <location>
        <begin position="147"/>
        <end position="149"/>
    </location>
    <ligand>
        <name>CTP</name>
        <dbReference type="ChEBI" id="CHEBI:37563"/>
        <note>allosteric inhibitor</note>
    </ligand>
</feature>
<feature type="binding site" evidence="1">
    <location>
        <begin position="187"/>
        <end position="192"/>
    </location>
    <ligand>
        <name>CTP</name>
        <dbReference type="ChEBI" id="CHEBI:37563"/>
        <note>allosteric inhibitor</note>
    </ligand>
</feature>
<feature type="binding site" evidence="1">
    <location>
        <begin position="187"/>
        <end position="192"/>
    </location>
    <ligand>
        <name>UTP</name>
        <dbReference type="ChEBI" id="CHEBI:46398"/>
    </ligand>
</feature>
<feature type="binding site" evidence="1">
    <location>
        <position position="223"/>
    </location>
    <ligand>
        <name>CTP</name>
        <dbReference type="ChEBI" id="CHEBI:37563"/>
        <note>allosteric inhibitor</note>
    </ligand>
</feature>
<feature type="binding site" evidence="1">
    <location>
        <position position="223"/>
    </location>
    <ligand>
        <name>UTP</name>
        <dbReference type="ChEBI" id="CHEBI:46398"/>
    </ligand>
</feature>
<feature type="binding site" evidence="1">
    <location>
        <begin position="239"/>
        <end position="241"/>
    </location>
    <ligand>
        <name>ATP</name>
        <dbReference type="ChEBI" id="CHEBI:30616"/>
    </ligand>
</feature>
<feature type="binding site" evidence="1">
    <location>
        <position position="352"/>
    </location>
    <ligand>
        <name>L-glutamine</name>
        <dbReference type="ChEBI" id="CHEBI:58359"/>
    </ligand>
</feature>
<feature type="binding site" evidence="1">
    <location>
        <begin position="380"/>
        <end position="383"/>
    </location>
    <ligand>
        <name>L-glutamine</name>
        <dbReference type="ChEBI" id="CHEBI:58359"/>
    </ligand>
</feature>
<feature type="binding site" evidence="1">
    <location>
        <position position="403"/>
    </location>
    <ligand>
        <name>L-glutamine</name>
        <dbReference type="ChEBI" id="CHEBI:58359"/>
    </ligand>
</feature>
<feature type="binding site" evidence="1">
    <location>
        <position position="470"/>
    </location>
    <ligand>
        <name>L-glutamine</name>
        <dbReference type="ChEBI" id="CHEBI:58359"/>
    </ligand>
</feature>
<dbReference type="EC" id="6.3.4.2" evidence="1"/>
<dbReference type="EMBL" id="CP001321">
    <property type="protein sequence ID" value="ACL32661.1"/>
    <property type="molecule type" value="Genomic_DNA"/>
</dbReference>
<dbReference type="RefSeq" id="WP_015939589.1">
    <property type="nucleotide sequence ID" value="NC_011852.1"/>
</dbReference>
<dbReference type="SMR" id="B8F5Q9"/>
<dbReference type="STRING" id="557723.HAPS_1042"/>
<dbReference type="MEROPS" id="C26.964"/>
<dbReference type="KEGG" id="hap:HAPS_1042"/>
<dbReference type="PATRIC" id="fig|557723.8.peg.1037"/>
<dbReference type="HOGENOM" id="CLU_011675_5_0_6"/>
<dbReference type="UniPathway" id="UPA00159">
    <property type="reaction ID" value="UER00277"/>
</dbReference>
<dbReference type="Proteomes" id="UP000006743">
    <property type="component" value="Chromosome"/>
</dbReference>
<dbReference type="GO" id="GO:0005829">
    <property type="term" value="C:cytosol"/>
    <property type="evidence" value="ECO:0007669"/>
    <property type="project" value="TreeGrafter"/>
</dbReference>
<dbReference type="GO" id="GO:0005524">
    <property type="term" value="F:ATP binding"/>
    <property type="evidence" value="ECO:0007669"/>
    <property type="project" value="UniProtKB-KW"/>
</dbReference>
<dbReference type="GO" id="GO:0003883">
    <property type="term" value="F:CTP synthase activity"/>
    <property type="evidence" value="ECO:0007669"/>
    <property type="project" value="UniProtKB-UniRule"/>
</dbReference>
<dbReference type="GO" id="GO:0004359">
    <property type="term" value="F:glutaminase activity"/>
    <property type="evidence" value="ECO:0007669"/>
    <property type="project" value="RHEA"/>
</dbReference>
<dbReference type="GO" id="GO:0042802">
    <property type="term" value="F:identical protein binding"/>
    <property type="evidence" value="ECO:0007669"/>
    <property type="project" value="TreeGrafter"/>
</dbReference>
<dbReference type="GO" id="GO:0046872">
    <property type="term" value="F:metal ion binding"/>
    <property type="evidence" value="ECO:0007669"/>
    <property type="project" value="UniProtKB-KW"/>
</dbReference>
<dbReference type="GO" id="GO:0044210">
    <property type="term" value="P:'de novo' CTP biosynthetic process"/>
    <property type="evidence" value="ECO:0007669"/>
    <property type="project" value="UniProtKB-UniRule"/>
</dbReference>
<dbReference type="GO" id="GO:0019856">
    <property type="term" value="P:pyrimidine nucleobase biosynthetic process"/>
    <property type="evidence" value="ECO:0007669"/>
    <property type="project" value="TreeGrafter"/>
</dbReference>
<dbReference type="CDD" id="cd03113">
    <property type="entry name" value="CTPS_N"/>
    <property type="match status" value="1"/>
</dbReference>
<dbReference type="CDD" id="cd01746">
    <property type="entry name" value="GATase1_CTP_Synthase"/>
    <property type="match status" value="1"/>
</dbReference>
<dbReference type="FunFam" id="3.40.50.300:FF:000009">
    <property type="entry name" value="CTP synthase"/>
    <property type="match status" value="1"/>
</dbReference>
<dbReference type="FunFam" id="3.40.50.880:FF:000002">
    <property type="entry name" value="CTP synthase"/>
    <property type="match status" value="1"/>
</dbReference>
<dbReference type="Gene3D" id="3.40.50.880">
    <property type="match status" value="1"/>
</dbReference>
<dbReference type="Gene3D" id="3.40.50.300">
    <property type="entry name" value="P-loop containing nucleotide triphosphate hydrolases"/>
    <property type="match status" value="1"/>
</dbReference>
<dbReference type="HAMAP" id="MF_01227">
    <property type="entry name" value="PyrG"/>
    <property type="match status" value="1"/>
</dbReference>
<dbReference type="InterPro" id="IPR029062">
    <property type="entry name" value="Class_I_gatase-like"/>
</dbReference>
<dbReference type="InterPro" id="IPR004468">
    <property type="entry name" value="CTP_synthase"/>
</dbReference>
<dbReference type="InterPro" id="IPR017456">
    <property type="entry name" value="CTP_synthase_N"/>
</dbReference>
<dbReference type="InterPro" id="IPR017926">
    <property type="entry name" value="GATASE"/>
</dbReference>
<dbReference type="InterPro" id="IPR033828">
    <property type="entry name" value="GATase1_CTP_Synthase"/>
</dbReference>
<dbReference type="InterPro" id="IPR027417">
    <property type="entry name" value="P-loop_NTPase"/>
</dbReference>
<dbReference type="NCBIfam" id="NF003792">
    <property type="entry name" value="PRK05380.1"/>
    <property type="match status" value="1"/>
</dbReference>
<dbReference type="NCBIfam" id="TIGR00337">
    <property type="entry name" value="PyrG"/>
    <property type="match status" value="1"/>
</dbReference>
<dbReference type="PANTHER" id="PTHR11550">
    <property type="entry name" value="CTP SYNTHASE"/>
    <property type="match status" value="1"/>
</dbReference>
<dbReference type="PANTHER" id="PTHR11550:SF0">
    <property type="entry name" value="CTP SYNTHASE-RELATED"/>
    <property type="match status" value="1"/>
</dbReference>
<dbReference type="Pfam" id="PF06418">
    <property type="entry name" value="CTP_synth_N"/>
    <property type="match status" value="1"/>
</dbReference>
<dbReference type="Pfam" id="PF00117">
    <property type="entry name" value="GATase"/>
    <property type="match status" value="1"/>
</dbReference>
<dbReference type="SUPFAM" id="SSF52317">
    <property type="entry name" value="Class I glutamine amidotransferase-like"/>
    <property type="match status" value="1"/>
</dbReference>
<dbReference type="SUPFAM" id="SSF52540">
    <property type="entry name" value="P-loop containing nucleoside triphosphate hydrolases"/>
    <property type="match status" value="1"/>
</dbReference>
<dbReference type="PROSITE" id="PS51273">
    <property type="entry name" value="GATASE_TYPE_1"/>
    <property type="match status" value="1"/>
</dbReference>
<reference key="1">
    <citation type="journal article" date="2009" name="J. Bacteriol.">
        <title>Complete genome sequence of Haemophilus parasuis SH0165.</title>
        <authorList>
            <person name="Yue M."/>
            <person name="Yang F."/>
            <person name="Yang J."/>
            <person name="Bei W."/>
            <person name="Cai X."/>
            <person name="Chen L."/>
            <person name="Dong J."/>
            <person name="Zhou R."/>
            <person name="Jin M."/>
            <person name="Jin Q."/>
            <person name="Chen H."/>
        </authorList>
    </citation>
    <scope>NUCLEOTIDE SEQUENCE [LARGE SCALE GENOMIC DNA]</scope>
    <source>
        <strain>SH0165</strain>
    </source>
</reference>
<proteinExistence type="inferred from homology"/>
<accession>B8F5Q9</accession>
<comment type="function">
    <text evidence="1">Catalyzes the ATP-dependent amination of UTP to CTP with either L-glutamine or ammonia as the source of nitrogen. Regulates intracellular CTP levels through interactions with the four ribonucleotide triphosphates.</text>
</comment>
<comment type="catalytic activity">
    <reaction evidence="1">
        <text>UTP + L-glutamine + ATP + H2O = CTP + L-glutamate + ADP + phosphate + 2 H(+)</text>
        <dbReference type="Rhea" id="RHEA:26426"/>
        <dbReference type="ChEBI" id="CHEBI:15377"/>
        <dbReference type="ChEBI" id="CHEBI:15378"/>
        <dbReference type="ChEBI" id="CHEBI:29985"/>
        <dbReference type="ChEBI" id="CHEBI:30616"/>
        <dbReference type="ChEBI" id="CHEBI:37563"/>
        <dbReference type="ChEBI" id="CHEBI:43474"/>
        <dbReference type="ChEBI" id="CHEBI:46398"/>
        <dbReference type="ChEBI" id="CHEBI:58359"/>
        <dbReference type="ChEBI" id="CHEBI:456216"/>
        <dbReference type="EC" id="6.3.4.2"/>
    </reaction>
</comment>
<comment type="catalytic activity">
    <reaction evidence="1">
        <text>L-glutamine + H2O = L-glutamate + NH4(+)</text>
        <dbReference type="Rhea" id="RHEA:15889"/>
        <dbReference type="ChEBI" id="CHEBI:15377"/>
        <dbReference type="ChEBI" id="CHEBI:28938"/>
        <dbReference type="ChEBI" id="CHEBI:29985"/>
        <dbReference type="ChEBI" id="CHEBI:58359"/>
    </reaction>
</comment>
<comment type="catalytic activity">
    <reaction evidence="1">
        <text>UTP + NH4(+) + ATP = CTP + ADP + phosphate + 2 H(+)</text>
        <dbReference type="Rhea" id="RHEA:16597"/>
        <dbReference type="ChEBI" id="CHEBI:15378"/>
        <dbReference type="ChEBI" id="CHEBI:28938"/>
        <dbReference type="ChEBI" id="CHEBI:30616"/>
        <dbReference type="ChEBI" id="CHEBI:37563"/>
        <dbReference type="ChEBI" id="CHEBI:43474"/>
        <dbReference type="ChEBI" id="CHEBI:46398"/>
        <dbReference type="ChEBI" id="CHEBI:456216"/>
    </reaction>
</comment>
<comment type="activity regulation">
    <text evidence="1">Allosterically activated by GTP, when glutamine is the substrate; GTP has no effect on the reaction when ammonia is the substrate. The allosteric effector GTP functions by stabilizing the protein conformation that binds the tetrahedral intermediate(s) formed during glutamine hydrolysis. Inhibited by the product CTP, via allosteric rather than competitive inhibition.</text>
</comment>
<comment type="pathway">
    <text evidence="1">Pyrimidine metabolism; CTP biosynthesis via de novo pathway; CTP from UDP: step 2/2.</text>
</comment>
<comment type="subunit">
    <text evidence="1">Homotetramer.</text>
</comment>
<comment type="miscellaneous">
    <text evidence="1">CTPSs have evolved a hybrid strategy for distinguishing between UTP and CTP. The overlapping regions of the product feedback inhibitory and substrate sites recognize a common feature in both compounds, the triphosphate moiety. To differentiate isosteric substrate and product pyrimidine rings, an additional pocket far from the expected kinase/ligase catalytic site, specifically recognizes the cytosine and ribose portions of the product inhibitor.</text>
</comment>
<comment type="similarity">
    <text evidence="1">Belongs to the CTP synthase family.</text>
</comment>
<keyword id="KW-0067">ATP-binding</keyword>
<keyword id="KW-0315">Glutamine amidotransferase</keyword>
<keyword id="KW-0436">Ligase</keyword>
<keyword id="KW-0460">Magnesium</keyword>
<keyword id="KW-0479">Metal-binding</keyword>
<keyword id="KW-0547">Nucleotide-binding</keyword>
<keyword id="KW-0665">Pyrimidine biosynthesis</keyword>
<keyword id="KW-1185">Reference proteome</keyword>
<name>PYRG_GLAP5</name>